<gene>
    <name evidence="1" type="primary">hisS</name>
    <name type="ordered locus">Shew185_3004</name>
</gene>
<sequence>MAKQIQAIRGMNDILPTQSPLWQKVEAVLRSSVSAYGYSEIRTPIVENTDLFKRSIGEVTDIVEKEMYTFADNNGDSLTLRPEGTASTVRAGNENGLLYNQEQRLWYMGPMFRHERPQKGRYRQFNQFGVEVYGIGTADIDAEVLMLSARLWEKLGISDHVSLELNTLGDPAERAVYRDALIAFLEQHKDALDEDSKRRMYSNPLRVLDSKDQNVQAILAGAPELMDFLGEESKTHFSQLRELLDAVGIKYTINPRLVRGLDYYNRTVFEWVTSSLGSQGTVLAGGRYDGLVAQLGGKDTPAVGFAMGLERIVLLLETLELNKDIPSEVDVYVTAMGDSCLVEAIKIAQELRSALPNLKVMSHCGGGNVKKQMKRADKSGASVALLIGEDELAEGMVTVKHLRNDIEQQRVARSALGAFLAELAIK</sequence>
<accession>A6WQP6</accession>
<protein>
    <recommendedName>
        <fullName evidence="1">Histidine--tRNA ligase</fullName>
        <ecNumber evidence="1">6.1.1.21</ecNumber>
    </recommendedName>
    <alternativeName>
        <fullName evidence="1">Histidyl-tRNA synthetase</fullName>
        <shortName evidence="1">HisRS</shortName>
    </alternativeName>
</protein>
<feature type="chain" id="PRO_1000016444" description="Histidine--tRNA ligase">
    <location>
        <begin position="1"/>
        <end position="426"/>
    </location>
</feature>
<proteinExistence type="inferred from homology"/>
<comment type="catalytic activity">
    <reaction evidence="1">
        <text>tRNA(His) + L-histidine + ATP = L-histidyl-tRNA(His) + AMP + diphosphate + H(+)</text>
        <dbReference type="Rhea" id="RHEA:17313"/>
        <dbReference type="Rhea" id="RHEA-COMP:9665"/>
        <dbReference type="Rhea" id="RHEA-COMP:9689"/>
        <dbReference type="ChEBI" id="CHEBI:15378"/>
        <dbReference type="ChEBI" id="CHEBI:30616"/>
        <dbReference type="ChEBI" id="CHEBI:33019"/>
        <dbReference type="ChEBI" id="CHEBI:57595"/>
        <dbReference type="ChEBI" id="CHEBI:78442"/>
        <dbReference type="ChEBI" id="CHEBI:78527"/>
        <dbReference type="ChEBI" id="CHEBI:456215"/>
        <dbReference type="EC" id="6.1.1.21"/>
    </reaction>
</comment>
<comment type="subunit">
    <text evidence="1">Homodimer.</text>
</comment>
<comment type="subcellular location">
    <subcellularLocation>
        <location evidence="1">Cytoplasm</location>
    </subcellularLocation>
</comment>
<comment type="similarity">
    <text evidence="1">Belongs to the class-II aminoacyl-tRNA synthetase family.</text>
</comment>
<dbReference type="EC" id="6.1.1.21" evidence="1"/>
<dbReference type="EMBL" id="CP000753">
    <property type="protein sequence ID" value="ABS09135.1"/>
    <property type="molecule type" value="Genomic_DNA"/>
</dbReference>
<dbReference type="RefSeq" id="WP_006082481.1">
    <property type="nucleotide sequence ID" value="NC_009665.1"/>
</dbReference>
<dbReference type="SMR" id="A6WQP6"/>
<dbReference type="KEGG" id="sbm:Shew185_3004"/>
<dbReference type="HOGENOM" id="CLU_025113_1_1_6"/>
<dbReference type="GO" id="GO:0005737">
    <property type="term" value="C:cytoplasm"/>
    <property type="evidence" value="ECO:0007669"/>
    <property type="project" value="UniProtKB-SubCell"/>
</dbReference>
<dbReference type="GO" id="GO:0005524">
    <property type="term" value="F:ATP binding"/>
    <property type="evidence" value="ECO:0007669"/>
    <property type="project" value="UniProtKB-UniRule"/>
</dbReference>
<dbReference type="GO" id="GO:0004821">
    <property type="term" value="F:histidine-tRNA ligase activity"/>
    <property type="evidence" value="ECO:0007669"/>
    <property type="project" value="UniProtKB-UniRule"/>
</dbReference>
<dbReference type="GO" id="GO:0006427">
    <property type="term" value="P:histidyl-tRNA aminoacylation"/>
    <property type="evidence" value="ECO:0007669"/>
    <property type="project" value="UniProtKB-UniRule"/>
</dbReference>
<dbReference type="CDD" id="cd00773">
    <property type="entry name" value="HisRS-like_core"/>
    <property type="match status" value="1"/>
</dbReference>
<dbReference type="CDD" id="cd00859">
    <property type="entry name" value="HisRS_anticodon"/>
    <property type="match status" value="1"/>
</dbReference>
<dbReference type="FunFam" id="3.30.930.10:FF:000005">
    <property type="entry name" value="Histidine--tRNA ligase"/>
    <property type="match status" value="1"/>
</dbReference>
<dbReference type="Gene3D" id="3.40.50.800">
    <property type="entry name" value="Anticodon-binding domain"/>
    <property type="match status" value="1"/>
</dbReference>
<dbReference type="Gene3D" id="3.30.930.10">
    <property type="entry name" value="Bira Bifunctional Protein, Domain 2"/>
    <property type="match status" value="1"/>
</dbReference>
<dbReference type="HAMAP" id="MF_00127">
    <property type="entry name" value="His_tRNA_synth"/>
    <property type="match status" value="1"/>
</dbReference>
<dbReference type="InterPro" id="IPR006195">
    <property type="entry name" value="aa-tRNA-synth_II"/>
</dbReference>
<dbReference type="InterPro" id="IPR045864">
    <property type="entry name" value="aa-tRNA-synth_II/BPL/LPL"/>
</dbReference>
<dbReference type="InterPro" id="IPR004154">
    <property type="entry name" value="Anticodon-bd"/>
</dbReference>
<dbReference type="InterPro" id="IPR036621">
    <property type="entry name" value="Anticodon-bd_dom_sf"/>
</dbReference>
<dbReference type="InterPro" id="IPR015807">
    <property type="entry name" value="His-tRNA-ligase"/>
</dbReference>
<dbReference type="InterPro" id="IPR041715">
    <property type="entry name" value="HisRS-like_core"/>
</dbReference>
<dbReference type="InterPro" id="IPR004516">
    <property type="entry name" value="HisRS/HisZ"/>
</dbReference>
<dbReference type="InterPro" id="IPR033656">
    <property type="entry name" value="HisRS_anticodon"/>
</dbReference>
<dbReference type="NCBIfam" id="TIGR00442">
    <property type="entry name" value="hisS"/>
    <property type="match status" value="1"/>
</dbReference>
<dbReference type="PANTHER" id="PTHR43707:SF1">
    <property type="entry name" value="HISTIDINE--TRNA LIGASE, MITOCHONDRIAL-RELATED"/>
    <property type="match status" value="1"/>
</dbReference>
<dbReference type="PANTHER" id="PTHR43707">
    <property type="entry name" value="HISTIDYL-TRNA SYNTHETASE"/>
    <property type="match status" value="1"/>
</dbReference>
<dbReference type="Pfam" id="PF03129">
    <property type="entry name" value="HGTP_anticodon"/>
    <property type="match status" value="1"/>
</dbReference>
<dbReference type="Pfam" id="PF13393">
    <property type="entry name" value="tRNA-synt_His"/>
    <property type="match status" value="1"/>
</dbReference>
<dbReference type="PIRSF" id="PIRSF001549">
    <property type="entry name" value="His-tRNA_synth"/>
    <property type="match status" value="1"/>
</dbReference>
<dbReference type="SUPFAM" id="SSF52954">
    <property type="entry name" value="Class II aaRS ABD-related"/>
    <property type="match status" value="1"/>
</dbReference>
<dbReference type="SUPFAM" id="SSF55681">
    <property type="entry name" value="Class II aaRS and biotin synthetases"/>
    <property type="match status" value="1"/>
</dbReference>
<dbReference type="PROSITE" id="PS50862">
    <property type="entry name" value="AA_TRNA_LIGASE_II"/>
    <property type="match status" value="1"/>
</dbReference>
<name>SYH_SHEB8</name>
<organism>
    <name type="scientific">Shewanella baltica (strain OS185)</name>
    <dbReference type="NCBI Taxonomy" id="402882"/>
    <lineage>
        <taxon>Bacteria</taxon>
        <taxon>Pseudomonadati</taxon>
        <taxon>Pseudomonadota</taxon>
        <taxon>Gammaproteobacteria</taxon>
        <taxon>Alteromonadales</taxon>
        <taxon>Shewanellaceae</taxon>
        <taxon>Shewanella</taxon>
    </lineage>
</organism>
<evidence type="ECO:0000255" key="1">
    <source>
        <dbReference type="HAMAP-Rule" id="MF_00127"/>
    </source>
</evidence>
<keyword id="KW-0030">Aminoacyl-tRNA synthetase</keyword>
<keyword id="KW-0067">ATP-binding</keyword>
<keyword id="KW-0963">Cytoplasm</keyword>
<keyword id="KW-0436">Ligase</keyword>
<keyword id="KW-0547">Nucleotide-binding</keyword>
<keyword id="KW-0648">Protein biosynthesis</keyword>
<reference key="1">
    <citation type="submission" date="2007-07" db="EMBL/GenBank/DDBJ databases">
        <title>Complete sequence of chromosome of Shewanella baltica OS185.</title>
        <authorList>
            <consortium name="US DOE Joint Genome Institute"/>
            <person name="Copeland A."/>
            <person name="Lucas S."/>
            <person name="Lapidus A."/>
            <person name="Barry K."/>
            <person name="Glavina del Rio T."/>
            <person name="Dalin E."/>
            <person name="Tice H."/>
            <person name="Pitluck S."/>
            <person name="Sims D."/>
            <person name="Brettin T."/>
            <person name="Bruce D."/>
            <person name="Detter J.C."/>
            <person name="Han C."/>
            <person name="Schmutz J."/>
            <person name="Larimer F."/>
            <person name="Land M."/>
            <person name="Hauser L."/>
            <person name="Kyrpides N."/>
            <person name="Mikhailova N."/>
            <person name="Brettar I."/>
            <person name="Rodrigues J."/>
            <person name="Konstantinidis K."/>
            <person name="Tiedje J."/>
            <person name="Richardson P."/>
        </authorList>
    </citation>
    <scope>NUCLEOTIDE SEQUENCE [LARGE SCALE GENOMIC DNA]</scope>
    <source>
        <strain>OS185</strain>
    </source>
</reference>